<reference key="1">
    <citation type="journal article" date="2001" name="Lancet">
        <title>Whole genome sequencing of meticillin-resistant Staphylococcus aureus.</title>
        <authorList>
            <person name="Kuroda M."/>
            <person name="Ohta T."/>
            <person name="Uchiyama I."/>
            <person name="Baba T."/>
            <person name="Yuzawa H."/>
            <person name="Kobayashi I."/>
            <person name="Cui L."/>
            <person name="Oguchi A."/>
            <person name="Aoki K."/>
            <person name="Nagai Y."/>
            <person name="Lian J.-Q."/>
            <person name="Ito T."/>
            <person name="Kanamori M."/>
            <person name="Matsumaru H."/>
            <person name="Maruyama A."/>
            <person name="Murakami H."/>
            <person name="Hosoyama A."/>
            <person name="Mizutani-Ui Y."/>
            <person name="Takahashi N.K."/>
            <person name="Sawano T."/>
            <person name="Inoue R."/>
            <person name="Kaito C."/>
            <person name="Sekimizu K."/>
            <person name="Hirakawa H."/>
            <person name="Kuhara S."/>
            <person name="Goto S."/>
            <person name="Yabuzaki J."/>
            <person name="Kanehisa M."/>
            <person name="Yamashita A."/>
            <person name="Oshima K."/>
            <person name="Furuya K."/>
            <person name="Yoshino C."/>
            <person name="Shiba T."/>
            <person name="Hattori M."/>
            <person name="Ogasawara N."/>
            <person name="Hayashi H."/>
            <person name="Hiramatsu K."/>
        </authorList>
    </citation>
    <scope>NUCLEOTIDE SEQUENCE [LARGE SCALE GENOMIC DNA]</scope>
    <source>
        <strain>Mu50 / ATCC 700699</strain>
    </source>
</reference>
<gene>
    <name type="ordered locus">SAV1739</name>
</gene>
<keyword id="KW-1003">Cell membrane</keyword>
<keyword id="KW-0472">Membrane</keyword>
<keyword id="KW-0812">Transmembrane</keyword>
<keyword id="KW-1133">Transmembrane helix</keyword>
<sequence>MDWILPIAGIIAAIAFLILCIGIVAVLNSVKKNLDYVAKTLDGVEGQVQGITRETTDLLHKVNRLTEDIQGKVDRLNSVVDAVKGIGDSVQTLNSSVDRVTNSITHNISQNEDKISQVVQWSNVAMEIADKWQNRHYRRGSANYKANNVATDANHSYTSRVDK</sequence>
<name>Y1739_STAAM</name>
<evidence type="ECO:0000255" key="1"/>
<evidence type="ECO:0000305" key="2"/>
<dbReference type="EMBL" id="BA000017">
    <property type="protein sequence ID" value="BAB57901.1"/>
    <property type="molecule type" value="Genomic_DNA"/>
</dbReference>
<dbReference type="RefSeq" id="WP_000383814.1">
    <property type="nucleotide sequence ID" value="NC_002758.2"/>
</dbReference>
<dbReference type="SMR" id="Q99TC5"/>
<dbReference type="DNASU" id="1121714"/>
<dbReference type="KEGG" id="sav:SAV1739"/>
<dbReference type="HOGENOM" id="CLU_115870_0_0_9"/>
<dbReference type="PhylomeDB" id="Q99TC5"/>
<dbReference type="Proteomes" id="UP000002481">
    <property type="component" value="Chromosome"/>
</dbReference>
<dbReference type="GO" id="GO:0005886">
    <property type="term" value="C:plasma membrane"/>
    <property type="evidence" value="ECO:0007669"/>
    <property type="project" value="UniProtKB-SubCell"/>
</dbReference>
<dbReference type="Gene3D" id="1.10.287.950">
    <property type="entry name" value="Methyl-accepting chemotaxis protein"/>
    <property type="match status" value="1"/>
</dbReference>
<dbReference type="InterPro" id="IPR009293">
    <property type="entry name" value="UPF0478"/>
</dbReference>
<dbReference type="PANTHER" id="PTHR40070">
    <property type="entry name" value="UPF0478 PROTEIN YTXG"/>
    <property type="match status" value="1"/>
</dbReference>
<dbReference type="PANTHER" id="PTHR40070:SF1">
    <property type="entry name" value="UPF0478 PROTEIN YTXG"/>
    <property type="match status" value="1"/>
</dbReference>
<dbReference type="Pfam" id="PF06103">
    <property type="entry name" value="DUF948"/>
    <property type="match status" value="1"/>
</dbReference>
<dbReference type="SUPFAM" id="SSF58104">
    <property type="entry name" value="Methyl-accepting chemotaxis protein (MCP) signaling domain"/>
    <property type="match status" value="1"/>
</dbReference>
<accession>Q99TC5</accession>
<comment type="subcellular location">
    <subcellularLocation>
        <location evidence="2">Cell membrane</location>
        <topology evidence="2">Single-pass membrane protein</topology>
    </subcellularLocation>
</comment>
<comment type="similarity">
    <text evidence="2">Belongs to the UPF0478 family.</text>
</comment>
<protein>
    <recommendedName>
        <fullName>UPF0478 protein SAV1739</fullName>
    </recommendedName>
</protein>
<feature type="chain" id="PRO_0000299436" description="UPF0478 protein SAV1739">
    <location>
        <begin position="1"/>
        <end position="163"/>
    </location>
</feature>
<feature type="transmembrane region" description="Helical" evidence="1">
    <location>
        <begin position="7"/>
        <end position="27"/>
    </location>
</feature>
<proteinExistence type="inferred from homology"/>
<organism>
    <name type="scientific">Staphylococcus aureus (strain Mu50 / ATCC 700699)</name>
    <dbReference type="NCBI Taxonomy" id="158878"/>
    <lineage>
        <taxon>Bacteria</taxon>
        <taxon>Bacillati</taxon>
        <taxon>Bacillota</taxon>
        <taxon>Bacilli</taxon>
        <taxon>Bacillales</taxon>
        <taxon>Staphylococcaceae</taxon>
        <taxon>Staphylococcus</taxon>
    </lineage>
</organism>